<protein>
    <recommendedName>
        <fullName evidence="1">Phosphopentomutase</fullName>
        <ecNumber evidence="1">5.4.2.7</ecNumber>
    </recommendedName>
    <alternativeName>
        <fullName evidence="1">Phosphodeoxyribomutase</fullName>
    </alternativeName>
</protein>
<feature type="chain" id="PRO_1000189774" description="Phosphopentomutase">
    <location>
        <begin position="1"/>
        <end position="390"/>
    </location>
</feature>
<feature type="binding site" evidence="1">
    <location>
        <position position="12"/>
    </location>
    <ligand>
        <name>Mn(2+)</name>
        <dbReference type="ChEBI" id="CHEBI:29035"/>
        <label>1</label>
    </ligand>
</feature>
<feature type="binding site" evidence="1">
    <location>
        <position position="285"/>
    </location>
    <ligand>
        <name>Mn(2+)</name>
        <dbReference type="ChEBI" id="CHEBI:29035"/>
        <label>2</label>
    </ligand>
</feature>
<feature type="binding site" evidence="1">
    <location>
        <position position="290"/>
    </location>
    <ligand>
        <name>Mn(2+)</name>
        <dbReference type="ChEBI" id="CHEBI:29035"/>
        <label>2</label>
    </ligand>
</feature>
<feature type="binding site" evidence="1">
    <location>
        <position position="326"/>
    </location>
    <ligand>
        <name>Mn(2+)</name>
        <dbReference type="ChEBI" id="CHEBI:29035"/>
        <label>1</label>
    </ligand>
</feature>
<feature type="binding site" evidence="1">
    <location>
        <position position="327"/>
    </location>
    <ligand>
        <name>Mn(2+)</name>
        <dbReference type="ChEBI" id="CHEBI:29035"/>
        <label>1</label>
    </ligand>
</feature>
<feature type="binding site" evidence="1">
    <location>
        <position position="338"/>
    </location>
    <ligand>
        <name>Mn(2+)</name>
        <dbReference type="ChEBI" id="CHEBI:29035"/>
        <label>2</label>
    </ligand>
</feature>
<evidence type="ECO:0000255" key="1">
    <source>
        <dbReference type="HAMAP-Rule" id="MF_00740"/>
    </source>
</evidence>
<reference key="1">
    <citation type="submission" date="2005-03" db="EMBL/GenBank/DDBJ databases">
        <title>Brevibacillus brevis strain 47, complete genome.</title>
        <authorList>
            <person name="Hosoyama A."/>
            <person name="Yamada R."/>
            <person name="Hongo Y."/>
            <person name="Terui Y."/>
            <person name="Ankai A."/>
            <person name="Masuyama W."/>
            <person name="Sekiguchi M."/>
            <person name="Takeda T."/>
            <person name="Asano K."/>
            <person name="Ohji S."/>
            <person name="Ichikawa N."/>
            <person name="Narita S."/>
            <person name="Aoki N."/>
            <person name="Miura H."/>
            <person name="Matsushita S."/>
            <person name="Sekigawa T."/>
            <person name="Yamagata H."/>
            <person name="Yoshikawa H."/>
            <person name="Udaka S."/>
            <person name="Tanikawa S."/>
            <person name="Fujita N."/>
        </authorList>
    </citation>
    <scope>NUCLEOTIDE SEQUENCE [LARGE SCALE GENOMIC DNA]</scope>
    <source>
        <strain>47 / JCM 6285 / NBRC 100599</strain>
    </source>
</reference>
<dbReference type="EC" id="5.4.2.7" evidence="1"/>
<dbReference type="EMBL" id="AP008955">
    <property type="protein sequence ID" value="BAH43359.1"/>
    <property type="molecule type" value="Genomic_DNA"/>
</dbReference>
<dbReference type="RefSeq" id="WP_012686074.1">
    <property type="nucleotide sequence ID" value="NC_012491.1"/>
</dbReference>
<dbReference type="SMR" id="C0ZC50"/>
<dbReference type="STRING" id="358681.BBR47_23820"/>
<dbReference type="KEGG" id="bbe:BBR47_23820"/>
<dbReference type="eggNOG" id="COG1015">
    <property type="taxonomic scope" value="Bacteria"/>
</dbReference>
<dbReference type="HOGENOM" id="CLU_053861_0_0_9"/>
<dbReference type="UniPathway" id="UPA00002">
    <property type="reaction ID" value="UER00467"/>
</dbReference>
<dbReference type="Proteomes" id="UP000001877">
    <property type="component" value="Chromosome"/>
</dbReference>
<dbReference type="GO" id="GO:0005829">
    <property type="term" value="C:cytosol"/>
    <property type="evidence" value="ECO:0007669"/>
    <property type="project" value="TreeGrafter"/>
</dbReference>
<dbReference type="GO" id="GO:0000287">
    <property type="term" value="F:magnesium ion binding"/>
    <property type="evidence" value="ECO:0007669"/>
    <property type="project" value="InterPro"/>
</dbReference>
<dbReference type="GO" id="GO:0030145">
    <property type="term" value="F:manganese ion binding"/>
    <property type="evidence" value="ECO:0007669"/>
    <property type="project" value="UniProtKB-UniRule"/>
</dbReference>
<dbReference type="GO" id="GO:0008973">
    <property type="term" value="F:phosphopentomutase activity"/>
    <property type="evidence" value="ECO:0007669"/>
    <property type="project" value="UniProtKB-UniRule"/>
</dbReference>
<dbReference type="GO" id="GO:0006018">
    <property type="term" value="P:2-deoxyribose 1-phosphate catabolic process"/>
    <property type="evidence" value="ECO:0007669"/>
    <property type="project" value="UniProtKB-UniRule"/>
</dbReference>
<dbReference type="GO" id="GO:0006015">
    <property type="term" value="P:5-phosphoribose 1-diphosphate biosynthetic process"/>
    <property type="evidence" value="ECO:0007669"/>
    <property type="project" value="UniProtKB-UniPathway"/>
</dbReference>
<dbReference type="GO" id="GO:0043094">
    <property type="term" value="P:metabolic compound salvage"/>
    <property type="evidence" value="ECO:0007669"/>
    <property type="project" value="InterPro"/>
</dbReference>
<dbReference type="GO" id="GO:0009117">
    <property type="term" value="P:nucleotide metabolic process"/>
    <property type="evidence" value="ECO:0007669"/>
    <property type="project" value="InterPro"/>
</dbReference>
<dbReference type="CDD" id="cd16009">
    <property type="entry name" value="PPM"/>
    <property type="match status" value="1"/>
</dbReference>
<dbReference type="FunFam" id="3.30.70.1250:FF:000001">
    <property type="entry name" value="Phosphopentomutase"/>
    <property type="match status" value="1"/>
</dbReference>
<dbReference type="Gene3D" id="3.40.720.10">
    <property type="entry name" value="Alkaline Phosphatase, subunit A"/>
    <property type="match status" value="1"/>
</dbReference>
<dbReference type="Gene3D" id="3.30.70.1250">
    <property type="entry name" value="Phosphopentomutase"/>
    <property type="match status" value="1"/>
</dbReference>
<dbReference type="HAMAP" id="MF_00740">
    <property type="entry name" value="Phosphopentomut"/>
    <property type="match status" value="1"/>
</dbReference>
<dbReference type="InterPro" id="IPR017850">
    <property type="entry name" value="Alkaline_phosphatase_core_sf"/>
</dbReference>
<dbReference type="InterPro" id="IPR010045">
    <property type="entry name" value="DeoB"/>
</dbReference>
<dbReference type="InterPro" id="IPR006124">
    <property type="entry name" value="Metalloenzyme"/>
</dbReference>
<dbReference type="InterPro" id="IPR024052">
    <property type="entry name" value="Phosphopentomutase_DeoB_cap_sf"/>
</dbReference>
<dbReference type="NCBIfam" id="TIGR01696">
    <property type="entry name" value="deoB"/>
    <property type="match status" value="1"/>
</dbReference>
<dbReference type="NCBIfam" id="NF003766">
    <property type="entry name" value="PRK05362.1"/>
    <property type="match status" value="1"/>
</dbReference>
<dbReference type="PANTHER" id="PTHR21110">
    <property type="entry name" value="PHOSPHOPENTOMUTASE"/>
    <property type="match status" value="1"/>
</dbReference>
<dbReference type="PANTHER" id="PTHR21110:SF0">
    <property type="entry name" value="PHOSPHOPENTOMUTASE"/>
    <property type="match status" value="1"/>
</dbReference>
<dbReference type="Pfam" id="PF01676">
    <property type="entry name" value="Metalloenzyme"/>
    <property type="match status" value="1"/>
</dbReference>
<dbReference type="PIRSF" id="PIRSF001491">
    <property type="entry name" value="Ppentomutase"/>
    <property type="match status" value="1"/>
</dbReference>
<dbReference type="SUPFAM" id="SSF53649">
    <property type="entry name" value="Alkaline phosphatase-like"/>
    <property type="match status" value="1"/>
</dbReference>
<dbReference type="SUPFAM" id="SSF143856">
    <property type="entry name" value="DeoB insert domain-like"/>
    <property type="match status" value="1"/>
</dbReference>
<sequence length="390" mass="42784">MQYSRVFLIVMDSVGIGEQPDAPKFNDAGANTLGHIAERVAGFSLPNLQKLGLGNIAPLKNVEPVAAPMAHYGKMQEISMGKDTTTGHWEIMGLHVSTPFNTYPDGFPQELISEFEQRIGRKVLGNKVASGTDILDELGEEHMKTGAVIVYTSADSVFQVAAHEEIVPLEELYHICEVARELTLRDEFAVTRVIARPFLGQPGNFSRTANRHDYSVKPFAPTVMNRLQDAGLSSIAIGKISDIYAEEGVTQSIRTKDNMDGVDQILGTMKQSFTGLSFVNLVDFDAKFGHRRDPEGYGQALMEFDARIPELLEALQENDLLVITADHGNDPVHHGSDHTREYVPLLAYHKGIQAGQHLGIRETFADLGATIADNFGVTAPVIGKSFLNRL</sequence>
<accession>C0ZC50</accession>
<comment type="function">
    <text evidence="1">Isomerase that catalyzes the conversion of deoxy-ribose 1-phosphate (dRib-1-P) and ribose 1-phosphate (Rib-1-P) to deoxy-ribose 5-phosphate (dRib-5-P) and ribose 5-phosphate (Rib-5-P), respectively.</text>
</comment>
<comment type="catalytic activity">
    <reaction evidence="1">
        <text>2-deoxy-alpha-D-ribose 1-phosphate = 2-deoxy-D-ribose 5-phosphate</text>
        <dbReference type="Rhea" id="RHEA:27658"/>
        <dbReference type="ChEBI" id="CHEBI:57259"/>
        <dbReference type="ChEBI" id="CHEBI:62877"/>
        <dbReference type="EC" id="5.4.2.7"/>
    </reaction>
</comment>
<comment type="catalytic activity">
    <reaction evidence="1">
        <text>alpha-D-ribose 1-phosphate = D-ribose 5-phosphate</text>
        <dbReference type="Rhea" id="RHEA:18793"/>
        <dbReference type="ChEBI" id="CHEBI:57720"/>
        <dbReference type="ChEBI" id="CHEBI:78346"/>
        <dbReference type="EC" id="5.4.2.7"/>
    </reaction>
</comment>
<comment type="cofactor">
    <cofactor evidence="1">
        <name>Mn(2+)</name>
        <dbReference type="ChEBI" id="CHEBI:29035"/>
    </cofactor>
    <text evidence="1">Binds 2 manganese ions.</text>
</comment>
<comment type="pathway">
    <text evidence="1">Carbohydrate degradation; 2-deoxy-D-ribose 1-phosphate degradation; D-glyceraldehyde 3-phosphate and acetaldehyde from 2-deoxy-alpha-D-ribose 1-phosphate: step 1/2.</text>
</comment>
<comment type="subcellular location">
    <subcellularLocation>
        <location evidence="1">Cytoplasm</location>
    </subcellularLocation>
</comment>
<comment type="similarity">
    <text evidence="1">Belongs to the phosphopentomutase family.</text>
</comment>
<gene>
    <name evidence="1" type="primary">deoB</name>
    <name type="ordered locus">BBR47_23820</name>
</gene>
<organism>
    <name type="scientific">Brevibacillus brevis (strain 47 / JCM 6285 / NBRC 100599)</name>
    <dbReference type="NCBI Taxonomy" id="358681"/>
    <lineage>
        <taxon>Bacteria</taxon>
        <taxon>Bacillati</taxon>
        <taxon>Bacillota</taxon>
        <taxon>Bacilli</taxon>
        <taxon>Bacillales</taxon>
        <taxon>Paenibacillaceae</taxon>
        <taxon>Brevibacillus</taxon>
    </lineage>
</organism>
<proteinExistence type="inferred from homology"/>
<name>DEOB_BREBN</name>
<keyword id="KW-0963">Cytoplasm</keyword>
<keyword id="KW-0413">Isomerase</keyword>
<keyword id="KW-0464">Manganese</keyword>
<keyword id="KW-0479">Metal-binding</keyword>
<keyword id="KW-1185">Reference proteome</keyword>